<accession>P65507</accession>
<accession>Q99SX5</accession>
<name>NADE_STAAW</name>
<protein>
    <recommendedName>
        <fullName evidence="1">NH(3)-dependent NAD(+) synthetase</fullName>
        <ecNumber evidence="1">6.3.1.5</ecNumber>
    </recommendedName>
</protein>
<dbReference type="EC" id="6.3.1.5" evidence="1"/>
<dbReference type="EMBL" id="BA000033">
    <property type="protein sequence ID" value="BAB95718.1"/>
    <property type="molecule type" value="Genomic_DNA"/>
</dbReference>
<dbReference type="RefSeq" id="WP_000040866.1">
    <property type="nucleotide sequence ID" value="NC_003923.1"/>
</dbReference>
<dbReference type="SMR" id="P65507"/>
<dbReference type="KEGG" id="sam:MW1853"/>
<dbReference type="HOGENOM" id="CLU_059327_3_0_9"/>
<dbReference type="UniPathway" id="UPA00253">
    <property type="reaction ID" value="UER00333"/>
</dbReference>
<dbReference type="GO" id="GO:0005737">
    <property type="term" value="C:cytoplasm"/>
    <property type="evidence" value="ECO:0007669"/>
    <property type="project" value="InterPro"/>
</dbReference>
<dbReference type="GO" id="GO:0005524">
    <property type="term" value="F:ATP binding"/>
    <property type="evidence" value="ECO:0007669"/>
    <property type="project" value="UniProtKB-UniRule"/>
</dbReference>
<dbReference type="GO" id="GO:0004359">
    <property type="term" value="F:glutaminase activity"/>
    <property type="evidence" value="ECO:0007669"/>
    <property type="project" value="InterPro"/>
</dbReference>
<dbReference type="GO" id="GO:0046872">
    <property type="term" value="F:metal ion binding"/>
    <property type="evidence" value="ECO:0007669"/>
    <property type="project" value="UniProtKB-KW"/>
</dbReference>
<dbReference type="GO" id="GO:0003952">
    <property type="term" value="F:NAD+ synthase (glutamine-hydrolyzing) activity"/>
    <property type="evidence" value="ECO:0007669"/>
    <property type="project" value="InterPro"/>
</dbReference>
<dbReference type="GO" id="GO:0008795">
    <property type="term" value="F:NAD+ synthase activity"/>
    <property type="evidence" value="ECO:0007669"/>
    <property type="project" value="UniProtKB-UniRule"/>
</dbReference>
<dbReference type="GO" id="GO:0009435">
    <property type="term" value="P:NAD biosynthetic process"/>
    <property type="evidence" value="ECO:0007669"/>
    <property type="project" value="UniProtKB-UniRule"/>
</dbReference>
<dbReference type="CDD" id="cd00553">
    <property type="entry name" value="NAD_synthase"/>
    <property type="match status" value="1"/>
</dbReference>
<dbReference type="FunFam" id="3.40.50.620:FF:000015">
    <property type="entry name" value="NH(3)-dependent NAD(+) synthetase"/>
    <property type="match status" value="1"/>
</dbReference>
<dbReference type="Gene3D" id="3.40.50.620">
    <property type="entry name" value="HUPs"/>
    <property type="match status" value="1"/>
</dbReference>
<dbReference type="HAMAP" id="MF_00193">
    <property type="entry name" value="NadE_ammonia_dep"/>
    <property type="match status" value="1"/>
</dbReference>
<dbReference type="InterPro" id="IPR022310">
    <property type="entry name" value="NAD/GMP_synthase"/>
</dbReference>
<dbReference type="InterPro" id="IPR003694">
    <property type="entry name" value="NAD_synthase"/>
</dbReference>
<dbReference type="InterPro" id="IPR022926">
    <property type="entry name" value="NH(3)-dep_NAD(+)_synth"/>
</dbReference>
<dbReference type="InterPro" id="IPR014729">
    <property type="entry name" value="Rossmann-like_a/b/a_fold"/>
</dbReference>
<dbReference type="NCBIfam" id="TIGR00552">
    <property type="entry name" value="nadE"/>
    <property type="match status" value="1"/>
</dbReference>
<dbReference type="NCBIfam" id="NF001979">
    <property type="entry name" value="PRK00768.1"/>
    <property type="match status" value="1"/>
</dbReference>
<dbReference type="PANTHER" id="PTHR23090">
    <property type="entry name" value="NH 3 /GLUTAMINE-DEPENDENT NAD + SYNTHETASE"/>
    <property type="match status" value="1"/>
</dbReference>
<dbReference type="PANTHER" id="PTHR23090:SF7">
    <property type="entry name" value="NH(3)-DEPENDENT NAD(+) SYNTHETASE"/>
    <property type="match status" value="1"/>
</dbReference>
<dbReference type="Pfam" id="PF02540">
    <property type="entry name" value="NAD_synthase"/>
    <property type="match status" value="1"/>
</dbReference>
<dbReference type="SUPFAM" id="SSF52402">
    <property type="entry name" value="Adenine nucleotide alpha hydrolases-like"/>
    <property type="match status" value="1"/>
</dbReference>
<proteinExistence type="inferred from homology"/>
<comment type="function">
    <text evidence="1">Catalyzes the ATP-dependent amidation of deamido-NAD to form NAD. Uses ammonia as a nitrogen source.</text>
</comment>
<comment type="catalytic activity">
    <reaction evidence="1">
        <text>deamido-NAD(+) + NH4(+) + ATP = AMP + diphosphate + NAD(+) + H(+)</text>
        <dbReference type="Rhea" id="RHEA:21188"/>
        <dbReference type="ChEBI" id="CHEBI:15378"/>
        <dbReference type="ChEBI" id="CHEBI:28938"/>
        <dbReference type="ChEBI" id="CHEBI:30616"/>
        <dbReference type="ChEBI" id="CHEBI:33019"/>
        <dbReference type="ChEBI" id="CHEBI:57540"/>
        <dbReference type="ChEBI" id="CHEBI:58437"/>
        <dbReference type="ChEBI" id="CHEBI:456215"/>
        <dbReference type="EC" id="6.3.1.5"/>
    </reaction>
</comment>
<comment type="pathway">
    <text evidence="1">Cofactor biosynthesis; NAD(+) biosynthesis; NAD(+) from deamido-NAD(+) (ammonia route): step 1/1.</text>
</comment>
<comment type="subunit">
    <text evidence="1">Homodimer.</text>
</comment>
<comment type="similarity">
    <text evidence="1">Belongs to the NAD synthetase family.</text>
</comment>
<feature type="chain" id="PRO_0000152199" description="NH(3)-dependent NAD(+) synthetase">
    <location>
        <begin position="1"/>
        <end position="273"/>
    </location>
</feature>
<feature type="binding site" evidence="1">
    <location>
        <begin position="47"/>
        <end position="54"/>
    </location>
    <ligand>
        <name>ATP</name>
        <dbReference type="ChEBI" id="CHEBI:30616"/>
    </ligand>
</feature>
<feature type="binding site" evidence="1">
    <location>
        <position position="53"/>
    </location>
    <ligand>
        <name>Mg(2+)</name>
        <dbReference type="ChEBI" id="CHEBI:18420"/>
    </ligand>
</feature>
<feature type="binding site" evidence="1">
    <location>
        <position position="139"/>
    </location>
    <ligand>
        <name>deamido-NAD(+)</name>
        <dbReference type="ChEBI" id="CHEBI:58437"/>
    </ligand>
</feature>
<feature type="binding site" evidence="1">
    <location>
        <position position="159"/>
    </location>
    <ligand>
        <name>ATP</name>
        <dbReference type="ChEBI" id="CHEBI:30616"/>
    </ligand>
</feature>
<feature type="binding site" evidence="1">
    <location>
        <position position="164"/>
    </location>
    <ligand>
        <name>Mg(2+)</name>
        <dbReference type="ChEBI" id="CHEBI:18420"/>
    </ligand>
</feature>
<feature type="binding site" evidence="1">
    <location>
        <position position="172"/>
    </location>
    <ligand>
        <name>deamido-NAD(+)</name>
        <dbReference type="ChEBI" id="CHEBI:58437"/>
    </ligand>
</feature>
<feature type="binding site" evidence="1">
    <location>
        <position position="179"/>
    </location>
    <ligand>
        <name>deamido-NAD(+)</name>
        <dbReference type="ChEBI" id="CHEBI:58437"/>
    </ligand>
</feature>
<feature type="binding site" evidence="1">
    <location>
        <position position="188"/>
    </location>
    <ligand>
        <name>ATP</name>
        <dbReference type="ChEBI" id="CHEBI:30616"/>
    </ligand>
</feature>
<feature type="binding site" evidence="1">
    <location>
        <position position="210"/>
    </location>
    <ligand>
        <name>ATP</name>
        <dbReference type="ChEBI" id="CHEBI:30616"/>
    </ligand>
</feature>
<feature type="binding site" evidence="1">
    <location>
        <begin position="259"/>
        <end position="260"/>
    </location>
    <ligand>
        <name>deamido-NAD(+)</name>
        <dbReference type="ChEBI" id="CHEBI:58437"/>
    </ligand>
</feature>
<reference key="1">
    <citation type="journal article" date="2002" name="Lancet">
        <title>Genome and virulence determinants of high virulence community-acquired MRSA.</title>
        <authorList>
            <person name="Baba T."/>
            <person name="Takeuchi F."/>
            <person name="Kuroda M."/>
            <person name="Yuzawa H."/>
            <person name="Aoki K."/>
            <person name="Oguchi A."/>
            <person name="Nagai Y."/>
            <person name="Iwama N."/>
            <person name="Asano K."/>
            <person name="Naimi T."/>
            <person name="Kuroda H."/>
            <person name="Cui L."/>
            <person name="Yamamoto K."/>
            <person name="Hiramatsu K."/>
        </authorList>
    </citation>
    <scope>NUCLEOTIDE SEQUENCE [LARGE SCALE GENOMIC DNA]</scope>
    <source>
        <strain>MW2</strain>
    </source>
</reference>
<sequence length="273" mass="30683">MSKLQDVIVQEMKVKKRIDSAEEIMELKQFIKNYVQSHSFIKSLVLGISGGQDSTLVGKLVQMSVNELREEGIDCTFIAVKLPYGVQKDADEVDQALRFIEPDEIVTVNIKPAVDQSVQSLKEAGIVLTDFQKGNEKARERMKVQFSIASNRQGIVVGTDHSAENITGFYTKYGDGAADIAPIFGLNKRQGRQLLAYLGAPKELYEKTPTADLEDDKPQLPDEDALGVTYEAIDNYLEGKPVTPEEQKVIENHYIRNAHKRELAYTRYTWPKS</sequence>
<evidence type="ECO:0000255" key="1">
    <source>
        <dbReference type="HAMAP-Rule" id="MF_00193"/>
    </source>
</evidence>
<keyword id="KW-0067">ATP-binding</keyword>
<keyword id="KW-0436">Ligase</keyword>
<keyword id="KW-0460">Magnesium</keyword>
<keyword id="KW-0479">Metal-binding</keyword>
<keyword id="KW-0520">NAD</keyword>
<keyword id="KW-0547">Nucleotide-binding</keyword>
<gene>
    <name evidence="1" type="primary">nadE</name>
    <name type="ordered locus">MW1853</name>
</gene>
<organism>
    <name type="scientific">Staphylococcus aureus (strain MW2)</name>
    <dbReference type="NCBI Taxonomy" id="196620"/>
    <lineage>
        <taxon>Bacteria</taxon>
        <taxon>Bacillati</taxon>
        <taxon>Bacillota</taxon>
        <taxon>Bacilli</taxon>
        <taxon>Bacillales</taxon>
        <taxon>Staphylococcaceae</taxon>
        <taxon>Staphylococcus</taxon>
    </lineage>
</organism>